<accession>A0JM41</accession>
<gene>
    <name type="primary">mpz</name>
</gene>
<dbReference type="EMBL" id="BC125729">
    <property type="protein sequence ID" value="AAI25730.1"/>
    <property type="molecule type" value="mRNA"/>
</dbReference>
<dbReference type="RefSeq" id="NP_001072741.1">
    <property type="nucleotide sequence ID" value="NM_001079273.2"/>
</dbReference>
<dbReference type="SMR" id="A0JM41"/>
<dbReference type="FunCoup" id="A0JM41">
    <property type="interactions" value="839"/>
</dbReference>
<dbReference type="STRING" id="8364.ENSXETP00000026463"/>
<dbReference type="GlyCosmos" id="A0JM41">
    <property type="glycosylation" value="1 site, No reported glycans"/>
</dbReference>
<dbReference type="PaxDb" id="8364-ENSXETP00000060043"/>
<dbReference type="DNASU" id="780198"/>
<dbReference type="GeneID" id="780198"/>
<dbReference type="KEGG" id="xtr:780198"/>
<dbReference type="AGR" id="Xenbase:XB-GENE-876969"/>
<dbReference type="CTD" id="4359"/>
<dbReference type="Xenbase" id="XB-GENE-876969">
    <property type="gene designation" value="mpz"/>
</dbReference>
<dbReference type="eggNOG" id="ENOG502QVJ0">
    <property type="taxonomic scope" value="Eukaryota"/>
</dbReference>
<dbReference type="InParanoid" id="A0JM41"/>
<dbReference type="OMA" id="WVGDPHW"/>
<dbReference type="OrthoDB" id="9941287at2759"/>
<dbReference type="Proteomes" id="UP000008143">
    <property type="component" value="Chromosome 8"/>
</dbReference>
<dbReference type="Bgee" id="ENSXETG00000034086">
    <property type="expression patterns" value="Expressed in skeletal muscle tissue and 7 other cell types or tissues"/>
</dbReference>
<dbReference type="GO" id="GO:0005886">
    <property type="term" value="C:plasma membrane"/>
    <property type="evidence" value="ECO:0007669"/>
    <property type="project" value="UniProtKB-SubCell"/>
</dbReference>
<dbReference type="CDD" id="cd05879">
    <property type="entry name" value="IgV_P0"/>
    <property type="match status" value="1"/>
</dbReference>
<dbReference type="FunFam" id="2.60.40.10:FF:000193">
    <property type="entry name" value="Myelin protein zero-like 1 like"/>
    <property type="match status" value="1"/>
</dbReference>
<dbReference type="Gene3D" id="2.60.40.10">
    <property type="entry name" value="Immunoglobulins"/>
    <property type="match status" value="1"/>
</dbReference>
<dbReference type="InterPro" id="IPR007110">
    <property type="entry name" value="Ig-like_dom"/>
</dbReference>
<dbReference type="InterPro" id="IPR036179">
    <property type="entry name" value="Ig-like_dom_sf"/>
</dbReference>
<dbReference type="InterPro" id="IPR013783">
    <property type="entry name" value="Ig-like_fold"/>
</dbReference>
<dbReference type="InterPro" id="IPR003599">
    <property type="entry name" value="Ig_sub"/>
</dbReference>
<dbReference type="InterPro" id="IPR013106">
    <property type="entry name" value="Ig_V-set"/>
</dbReference>
<dbReference type="InterPro" id="IPR000920">
    <property type="entry name" value="Myelin_P0-rel"/>
</dbReference>
<dbReference type="InterPro" id="IPR047014">
    <property type="entry name" value="Myelin_P0_Ig-like"/>
</dbReference>
<dbReference type="InterPro" id="IPR019566">
    <property type="entry name" value="MYP0_C"/>
</dbReference>
<dbReference type="PANTHER" id="PTHR13869">
    <property type="entry name" value="MYELIN P0 RELATED"/>
    <property type="match status" value="1"/>
</dbReference>
<dbReference type="PANTHER" id="PTHR13869:SF7">
    <property type="entry name" value="MYELIN PROTEIN P0"/>
    <property type="match status" value="1"/>
</dbReference>
<dbReference type="Pfam" id="PF10570">
    <property type="entry name" value="Myelin-PO_C"/>
    <property type="match status" value="1"/>
</dbReference>
<dbReference type="Pfam" id="PF07686">
    <property type="entry name" value="V-set"/>
    <property type="match status" value="1"/>
</dbReference>
<dbReference type="PRINTS" id="PR00213">
    <property type="entry name" value="MYELINP0"/>
</dbReference>
<dbReference type="SMART" id="SM00409">
    <property type="entry name" value="IG"/>
    <property type="match status" value="1"/>
</dbReference>
<dbReference type="SMART" id="SM00406">
    <property type="entry name" value="IGv"/>
    <property type="match status" value="1"/>
</dbReference>
<dbReference type="SUPFAM" id="SSF48726">
    <property type="entry name" value="Immunoglobulin"/>
    <property type="match status" value="1"/>
</dbReference>
<dbReference type="PROSITE" id="PS50835">
    <property type="entry name" value="IG_LIKE"/>
    <property type="match status" value="1"/>
</dbReference>
<reference key="1">
    <citation type="submission" date="2006-10" db="EMBL/GenBank/DDBJ databases">
        <authorList>
            <consortium name="NIH - Xenopus Gene Collection (XGC) project"/>
        </authorList>
    </citation>
    <scope>NUCLEOTIDE SEQUENCE [LARGE SCALE MRNA]</scope>
    <source>
        <tissue>Testis</tissue>
    </source>
</reference>
<feature type="signal peptide" evidence="2">
    <location>
        <begin position="1"/>
        <end position="26"/>
    </location>
</feature>
<feature type="chain" id="PRO_0000376827" description="Myelin protein P0">
    <location>
        <begin position="27"/>
        <end position="243"/>
    </location>
</feature>
<feature type="topological domain" description="Extracellular" evidence="2">
    <location>
        <begin position="27"/>
        <end position="154"/>
    </location>
</feature>
<feature type="transmembrane region" description="Helical" evidence="2">
    <location>
        <begin position="155"/>
        <end position="175"/>
    </location>
</feature>
<feature type="topological domain" description="Cytoplasmic" evidence="2">
    <location>
        <begin position="176"/>
        <end position="243"/>
    </location>
</feature>
<feature type="domain" description="Ig-like V-type">
    <location>
        <begin position="27"/>
        <end position="141"/>
    </location>
</feature>
<feature type="region of interest" description="Disordered" evidence="4">
    <location>
        <begin position="201"/>
        <end position="243"/>
    </location>
</feature>
<feature type="compositionally biased region" description="Basic and acidic residues" evidence="4">
    <location>
        <begin position="222"/>
        <end position="243"/>
    </location>
</feature>
<feature type="glycosylation site" description="N-linked (GlcNAc...) asparagine" evidence="2">
    <location>
        <position position="118"/>
    </location>
</feature>
<feature type="disulfide bond" evidence="3">
    <location>
        <begin position="47"/>
        <end position="123"/>
    </location>
</feature>
<organism>
    <name type="scientific">Xenopus tropicalis</name>
    <name type="common">Western clawed frog</name>
    <name type="synonym">Silurana tropicalis</name>
    <dbReference type="NCBI Taxonomy" id="8364"/>
    <lineage>
        <taxon>Eukaryota</taxon>
        <taxon>Metazoa</taxon>
        <taxon>Chordata</taxon>
        <taxon>Craniata</taxon>
        <taxon>Vertebrata</taxon>
        <taxon>Euteleostomi</taxon>
        <taxon>Amphibia</taxon>
        <taxon>Batrachia</taxon>
        <taxon>Anura</taxon>
        <taxon>Pipoidea</taxon>
        <taxon>Pipidae</taxon>
        <taxon>Xenopodinae</taxon>
        <taxon>Xenopus</taxon>
        <taxon>Silurana</taxon>
    </lineage>
</organism>
<name>MYP0_XENTR</name>
<protein>
    <recommendedName>
        <fullName>Myelin protein P0</fullName>
    </recommendedName>
    <alternativeName>
        <fullName>Myelin peripheral protein</fullName>
        <shortName>MPP</shortName>
    </alternativeName>
    <alternativeName>
        <fullName>Myelin protein zero</fullName>
    </alternativeName>
</protein>
<evidence type="ECO:0000250" key="1"/>
<evidence type="ECO:0000255" key="2"/>
<evidence type="ECO:0000255" key="3">
    <source>
        <dbReference type="PROSITE-ProRule" id="PRU00114"/>
    </source>
</evidence>
<evidence type="ECO:0000256" key="4">
    <source>
        <dbReference type="SAM" id="MobiDB-lite"/>
    </source>
</evidence>
<evidence type="ECO:0000305" key="5"/>
<comment type="function">
    <text evidence="1">Creation of an extracellular membrane face which guides the wrapping process and ultimately compacts adjacent lamellae.</text>
</comment>
<comment type="subcellular location">
    <subcellularLocation>
        <location evidence="5">Cell membrane</location>
        <topology evidence="5">Single-pass type I membrane protein</topology>
    </subcellularLocation>
</comment>
<comment type="similarity">
    <text evidence="5">Belongs to the myelin P0 protein family.</text>
</comment>
<proteinExistence type="evidence at transcript level"/>
<keyword id="KW-1003">Cell membrane</keyword>
<keyword id="KW-1015">Disulfide bond</keyword>
<keyword id="KW-0325">Glycoprotein</keyword>
<keyword id="KW-0393">Immunoglobulin domain</keyword>
<keyword id="KW-0472">Membrane</keyword>
<keyword id="KW-1185">Reference proteome</keyword>
<keyword id="KW-0732">Signal</keyword>
<keyword id="KW-0812">Transmembrane</keyword>
<keyword id="KW-1133">Transmembrane helix</keyword>
<sequence length="243" mass="27093">MESSGLRAPCSLLVLLSALVLPPTLAIEVYTDREVYGTVGSRVTLSCSFWSSEWISDDVSVTWHYQPDHSREMYSIFHYAKGQPSIDAGVFKDRIEWVGSPKWKDASIVLHNLELIDNGTFTCDVKNPPDVVGKSSYVHLQVQEKGAARAGLVLGIIIAVALALVIVVTILILLIRYCWLRRQVRVQRELSALERGKLHKAKDSSKRSSRQTPILYAMLDQTRGKASEKKGKGGIGDSRKDRK</sequence>